<name>IKBL_ASFWA</name>
<comment type="function">
    <text evidence="1 2">IkB-like protein that inhibits the binding of NF-kappa-B to DNA, thereby downregulating pro-inflammatory cytokine production (By similarity). Forms a heterodimer with the NF-kappa-B subunit RELA/p65 and prevents the activation of the NF-kappa-B transcription factor (By similarity). Inhibits calcineurin function, which is required for the induction of nuclear factor of activated T cells (NFAT)-dependent immune response genes. Prevents the binding of substrates to calcineurin without affecting the phosphatase activity (By similarity). Does not contain the serine residues that are phosphorylated by host IkB kinase and thus is not degraded following stimulation of the NFkB pathway (By similarity).</text>
</comment>
<comment type="subunit">
    <text evidence="1 2">Interacts with host PPIA. Interacts with host PPP3CA/Calcineurin (By similarity). Interacts with host RELA/p65; interaction of the 32 kDa form with host RELA results in the formation of a stable complex with NF-kappa-B (By similarity). Interacts with host PPP3R1 (By similarity). Interacts with host EP300; this interaction inhibits the association of host EP300 with host RELA, JUN and NFATC2 (By similarity).</text>
</comment>
<comment type="subcellular location">
    <subcellularLocation>
        <location evidence="2">Host nucleus</location>
    </subcellularLocation>
    <subcellularLocation>
        <location evidence="2">Host cytoplasm</location>
    </subcellularLocation>
    <text evidence="2">Binding to host PPP3CA/Calcineurin may mask the second nuclear localization signal thereby contributing to the cytoplasmic retention of A238L.</text>
</comment>
<comment type="induction">
    <text evidence="3">Expressed in the early phase of the viral replicative cycle.</text>
</comment>
<comment type="domain">
    <text evidence="1">The C-terminal region contains the docking motifs PxIxITxC and FLCV, which are required and sufficient for binding to host calcineurin.</text>
</comment>
<comment type="PTM">
    <text evidence="2">The protein exists in a 28 kDa and a 32 kDa form, probably due to post-translational modifications which are neither phosphorylation, nor sumoylation.</text>
</comment>
<comment type="similarity">
    <text evidence="3">Belongs to the asfivirus A238L family.</text>
</comment>
<protein>
    <recommendedName>
        <fullName>IkB-like protein</fullName>
    </recommendedName>
    <alternativeName>
        <fullName>Ankyrin repeat domain-containing protein A238L</fullName>
    </alternativeName>
    <alternativeName>
        <fullName>p28</fullName>
    </alternativeName>
</protein>
<accession>P0C964</accession>
<organism>
    <name type="scientific">African swine fever virus (isolate Warthog/Namibia/Wart80/1980)</name>
    <name type="common">ASFV</name>
    <dbReference type="NCBI Taxonomy" id="561444"/>
    <lineage>
        <taxon>Viruses</taxon>
        <taxon>Varidnaviria</taxon>
        <taxon>Bamfordvirae</taxon>
        <taxon>Nucleocytoviricota</taxon>
        <taxon>Pokkesviricetes</taxon>
        <taxon>Asfuvirales</taxon>
        <taxon>Asfarviridae</taxon>
        <taxon>Asfivirus</taxon>
        <taxon>African swine fever virus</taxon>
    </lineage>
</organism>
<sequence length="238" mass="28148">MEHMFPENQIENLFVGWIKKHIRNGNLTLFEEFFKTDPWIVNRCDKNGSSVFMWICIYGRIDFLKFLFKQESYPGEIINPHRRDKDGNSALHYLAEKKNHLILEEVLGYFGKNGTRICLPNFNGITPVMKAAMRGRSLNMLSLIKFGADPTQKDYHRGFTAWDWAVFTGNMELVKSLNHDYQKPLYMHFPLYKLDVFHRWFKKKPKIIITGCKNNVYEKLPEQNPNFLCVKKLNKYGK</sequence>
<keyword id="KW-0040">ANK repeat</keyword>
<keyword id="KW-0244">Early protein</keyword>
<keyword id="KW-1035">Host cytoplasm</keyword>
<keyword id="KW-1048">Host nucleus</keyword>
<keyword id="KW-0945">Host-virus interaction</keyword>
<keyword id="KW-1100">Inhibition of host NF-kappa-B by virus</keyword>
<keyword id="KW-0677">Repeat</keyword>
<keyword id="KW-0832">Ubl conjugation</keyword>
<evidence type="ECO:0000250" key="1">
    <source>
        <dbReference type="UniProtKB" id="O36972"/>
    </source>
</evidence>
<evidence type="ECO:0000250" key="2">
    <source>
        <dbReference type="UniProtKB" id="Q76U48"/>
    </source>
</evidence>
<evidence type="ECO:0000305" key="3"/>
<reference key="1">
    <citation type="submission" date="2003-03" db="EMBL/GenBank/DDBJ databases">
        <title>African swine fever virus genomes.</title>
        <authorList>
            <person name="Kutish G.F."/>
            <person name="Rock D.L."/>
        </authorList>
    </citation>
    <scope>NUCLEOTIDE SEQUENCE [LARGE SCALE GENOMIC DNA]</scope>
</reference>
<feature type="chain" id="PRO_0000372835" description="IkB-like protein">
    <location>
        <begin position="1"/>
        <end position="238"/>
    </location>
</feature>
<feature type="repeat" description="ANK 1">
    <location>
        <begin position="47"/>
        <end position="76"/>
    </location>
</feature>
<feature type="repeat" description="ANK 2">
    <location>
        <begin position="86"/>
        <end position="119"/>
    </location>
</feature>
<feature type="repeat" description="ANK 3">
    <location>
        <begin position="123"/>
        <end position="152"/>
    </location>
</feature>
<feature type="repeat" description="ANK 4">
    <location>
        <begin position="157"/>
        <end position="186"/>
    </location>
</feature>
<feature type="short sequence motif" description="Nuclear localization signal" evidence="2">
    <location>
        <begin position="80"/>
        <end position="86"/>
    </location>
</feature>
<feature type="short sequence motif" description="Nuclear localization signal" evidence="2">
    <location>
        <begin position="202"/>
        <end position="213"/>
    </location>
</feature>
<feature type="short sequence motif" description="PxIxITxC motif; Interaction with host PPP3CA" evidence="1">
    <location>
        <begin position="205"/>
        <end position="212"/>
    </location>
</feature>
<feature type="short sequence motif" description="FLCV motif" evidence="1">
    <location>
        <begin position="227"/>
        <end position="230"/>
    </location>
</feature>
<dbReference type="EMBL" id="AY261366">
    <property type="status" value="NOT_ANNOTATED_CDS"/>
    <property type="molecule type" value="Genomic_DNA"/>
</dbReference>
<dbReference type="SMR" id="P0C964"/>
<dbReference type="Proteomes" id="UP000000858">
    <property type="component" value="Segment"/>
</dbReference>
<dbReference type="GO" id="GO:0030430">
    <property type="term" value="C:host cell cytoplasm"/>
    <property type="evidence" value="ECO:0007669"/>
    <property type="project" value="UniProtKB-SubCell"/>
</dbReference>
<dbReference type="GO" id="GO:0042025">
    <property type="term" value="C:host cell nucleus"/>
    <property type="evidence" value="ECO:0007669"/>
    <property type="project" value="UniProtKB-SubCell"/>
</dbReference>
<dbReference type="GO" id="GO:0085034">
    <property type="term" value="P:symbiont-mediated suppression of host NF-kappaB cascade"/>
    <property type="evidence" value="ECO:0007669"/>
    <property type="project" value="UniProtKB-KW"/>
</dbReference>
<dbReference type="FunFam" id="1.25.40.20:FF:001205">
    <property type="entry name" value="Predicted protein"/>
    <property type="match status" value="1"/>
</dbReference>
<dbReference type="Gene3D" id="1.25.40.20">
    <property type="entry name" value="Ankyrin repeat-containing domain"/>
    <property type="match status" value="1"/>
</dbReference>
<dbReference type="InterPro" id="IPR002110">
    <property type="entry name" value="Ankyrin_rpt"/>
</dbReference>
<dbReference type="InterPro" id="IPR036770">
    <property type="entry name" value="Ankyrin_rpt-contain_sf"/>
</dbReference>
<dbReference type="PANTHER" id="PTHR24198">
    <property type="entry name" value="ANKYRIN REPEAT AND PROTEIN KINASE DOMAIN-CONTAINING PROTEIN"/>
    <property type="match status" value="1"/>
</dbReference>
<dbReference type="PANTHER" id="PTHR24198:SF165">
    <property type="entry name" value="ANKYRIN REPEAT-CONTAINING PROTEIN-RELATED"/>
    <property type="match status" value="1"/>
</dbReference>
<dbReference type="Pfam" id="PF12796">
    <property type="entry name" value="Ank_2"/>
    <property type="match status" value="1"/>
</dbReference>
<dbReference type="SMART" id="SM00248">
    <property type="entry name" value="ANK"/>
    <property type="match status" value="4"/>
</dbReference>
<dbReference type="SUPFAM" id="SSF48403">
    <property type="entry name" value="Ankyrin repeat"/>
    <property type="match status" value="1"/>
</dbReference>
<dbReference type="PROSITE" id="PS50297">
    <property type="entry name" value="ANK_REP_REGION"/>
    <property type="match status" value="1"/>
</dbReference>
<dbReference type="PROSITE" id="PS50088">
    <property type="entry name" value="ANK_REPEAT"/>
    <property type="match status" value="1"/>
</dbReference>
<proteinExistence type="inferred from homology"/>
<gene>
    <name type="primary">A238L</name>
    <name type="ordered locus">War-049</name>
</gene>
<organismHost>
    <name type="scientific">Ornithodoros</name>
    <name type="common">relapsing fever ticks</name>
    <dbReference type="NCBI Taxonomy" id="6937"/>
</organismHost>
<organismHost>
    <name type="scientific">Phacochoerus aethiopicus</name>
    <name type="common">Warthog</name>
    <dbReference type="NCBI Taxonomy" id="85517"/>
</organismHost>
<organismHost>
    <name type="scientific">Phacochoerus africanus</name>
    <name type="common">Warthog</name>
    <dbReference type="NCBI Taxonomy" id="41426"/>
</organismHost>
<organismHost>
    <name type="scientific">Potamochoerus larvatus</name>
    <name type="common">Bushpig</name>
    <dbReference type="NCBI Taxonomy" id="273792"/>
</organismHost>
<organismHost>
    <name type="scientific">Sus scrofa</name>
    <name type="common">Pig</name>
    <dbReference type="NCBI Taxonomy" id="9823"/>
</organismHost>